<evidence type="ECO:0000250" key="1"/>
<evidence type="ECO:0000256" key="2">
    <source>
        <dbReference type="SAM" id="MobiDB-lite"/>
    </source>
</evidence>
<evidence type="ECO:0000305" key="3"/>
<protein>
    <recommendedName>
        <fullName>Hrp pili protein HrpA</fullName>
    </recommendedName>
    <alternativeName>
        <fullName>T3SS pilin HrpA</fullName>
    </alternativeName>
</protein>
<dbReference type="EMBL" id="L41863">
    <property type="protein sequence ID" value="AAB00133.1"/>
    <property type="molecule type" value="Genomic_DNA"/>
</dbReference>
<dbReference type="EMBL" id="AB112572">
    <property type="protein sequence ID" value="BAD20899.1"/>
    <property type="molecule type" value="Genomic_DNA"/>
</dbReference>
<dbReference type="RefSeq" id="WP_003314134.1">
    <property type="nucleotide sequence ID" value="NZ_VBUL01000010.1"/>
</dbReference>
<dbReference type="GO" id="GO:0005576">
    <property type="term" value="C:extracellular region"/>
    <property type="evidence" value="ECO:0007669"/>
    <property type="project" value="UniProtKB-SubCell"/>
</dbReference>
<dbReference type="GO" id="GO:0009289">
    <property type="term" value="C:pilus"/>
    <property type="evidence" value="ECO:0007669"/>
    <property type="project" value="UniProtKB-SubCell"/>
</dbReference>
<reference key="1">
    <citation type="journal article" date="1995" name="Mol. Plant Microbe Interact.">
        <title>The HrpZ proteins of Pseudomonas syringae pvs. syringae, glycinea, and tomato are encoded by an operon containing Yersinia ysc homologs and elicit the hypersensitive response in tomato but not soybean.</title>
        <authorList>
            <person name="Preston G."/>
            <person name="Huang H.-C."/>
            <person name="He S.Y."/>
            <person name="Collmer A."/>
        </authorList>
    </citation>
    <scope>NUCLEOTIDE SEQUENCE [GENOMIC DNA]</scope>
    <source>
        <strain>Pss61</strain>
    </source>
</reference>
<reference key="2">
    <citation type="submission" date="2003-06" db="EMBL/GenBank/DDBJ databases">
        <title>Phylogenic analysis of DNA sequences around the hrpZ regions of Pseudomonas syringae.</title>
        <authorList>
            <person name="Inoue Y."/>
            <person name="Takikawa Y."/>
        </authorList>
    </citation>
    <scope>NUCLEOTIDE SEQUENCE [GENOMIC DNA]</scope>
    <source>
        <strain>LOB2-1</strain>
    </source>
</reference>
<comment type="function">
    <text evidence="1">Major structural protein of the hrp pilus, which is a component of the type III secretion system (T3SS, Hrp secretion system) required for effector protein delivery, parasitism, and pathogenicity. The hrp pilus functions as a conduit for protein delivery into the host cell. Also, affects the expression of T3SS-associated genes. Required for full expression of genes that encode regulatory, secretion, and effector proteins of the T3SS. HrpA-mediated gene regulation apparently is through effect on the mRNA level of HrpR and HrpS (By similarity).</text>
</comment>
<comment type="subcellular location">
    <subcellularLocation>
        <location evidence="1">Secreted</location>
    </subcellularLocation>
    <subcellularLocation>
        <location evidence="1">Fimbrium</location>
    </subcellularLocation>
    <text evidence="1">Extracellular and secreted via type III secretion system.</text>
</comment>
<comment type="similarity">
    <text evidence="3">Belongs to the HrpA type 1 family.</text>
</comment>
<gene>
    <name type="primary">hrpA</name>
</gene>
<sequence>MTIMSSLAGAGRGVVNTIGGAAQGINSVKSSADRNAALVSNTGSTDSIDATRSSISKGDAKSAELDGTANEENGLLRESSMLAGFEDKKEALSNQIVASKIRNSVVQF</sequence>
<accession>Q52420</accession>
<accession>Q6L8Y2</accession>
<feature type="chain" id="PRO_0000219575" description="Hrp pili protein HrpA">
    <location>
        <begin position="1"/>
        <end position="108"/>
    </location>
</feature>
<feature type="region of interest" description="Disordered" evidence="2">
    <location>
        <begin position="41"/>
        <end position="73"/>
    </location>
</feature>
<feature type="compositionally biased region" description="Polar residues" evidence="2">
    <location>
        <begin position="41"/>
        <end position="56"/>
    </location>
</feature>
<organism>
    <name type="scientific">Pseudomonas syringae pv. syringae</name>
    <dbReference type="NCBI Taxonomy" id="321"/>
    <lineage>
        <taxon>Bacteria</taxon>
        <taxon>Pseudomonadati</taxon>
        <taxon>Pseudomonadota</taxon>
        <taxon>Gammaproteobacteria</taxon>
        <taxon>Pseudomonadales</taxon>
        <taxon>Pseudomonadaceae</taxon>
        <taxon>Pseudomonas</taxon>
        <taxon>Pseudomonas syringae</taxon>
    </lineage>
</organism>
<name>HRPA_PSESY</name>
<proteinExistence type="inferred from homology"/>
<keyword id="KW-0281">Fimbrium</keyword>
<keyword id="KW-0964">Secreted</keyword>
<keyword id="KW-0843">Virulence</keyword>